<name>PYRD_SHEDO</name>
<accession>Q12NG2</accession>
<dbReference type="EC" id="1.3.5.2" evidence="1"/>
<dbReference type="EMBL" id="CP000302">
    <property type="protein sequence ID" value="ABE55014.1"/>
    <property type="molecule type" value="Genomic_DNA"/>
</dbReference>
<dbReference type="RefSeq" id="WP_011496171.1">
    <property type="nucleotide sequence ID" value="NC_007954.1"/>
</dbReference>
<dbReference type="SMR" id="Q12NG2"/>
<dbReference type="STRING" id="318161.Sden_1730"/>
<dbReference type="KEGG" id="sdn:Sden_1730"/>
<dbReference type="eggNOG" id="COG0167">
    <property type="taxonomic scope" value="Bacteria"/>
</dbReference>
<dbReference type="HOGENOM" id="CLU_013640_2_0_6"/>
<dbReference type="OrthoDB" id="9802377at2"/>
<dbReference type="UniPathway" id="UPA00070">
    <property type="reaction ID" value="UER00946"/>
</dbReference>
<dbReference type="Proteomes" id="UP000001982">
    <property type="component" value="Chromosome"/>
</dbReference>
<dbReference type="GO" id="GO:0005737">
    <property type="term" value="C:cytoplasm"/>
    <property type="evidence" value="ECO:0007669"/>
    <property type="project" value="InterPro"/>
</dbReference>
<dbReference type="GO" id="GO:0005886">
    <property type="term" value="C:plasma membrane"/>
    <property type="evidence" value="ECO:0007669"/>
    <property type="project" value="UniProtKB-SubCell"/>
</dbReference>
<dbReference type="GO" id="GO:0106430">
    <property type="term" value="F:dihydroorotate dehydrogenase (quinone) activity"/>
    <property type="evidence" value="ECO:0007669"/>
    <property type="project" value="UniProtKB-EC"/>
</dbReference>
<dbReference type="GO" id="GO:0006207">
    <property type="term" value="P:'de novo' pyrimidine nucleobase biosynthetic process"/>
    <property type="evidence" value="ECO:0007669"/>
    <property type="project" value="InterPro"/>
</dbReference>
<dbReference type="GO" id="GO:0044205">
    <property type="term" value="P:'de novo' UMP biosynthetic process"/>
    <property type="evidence" value="ECO:0007669"/>
    <property type="project" value="UniProtKB-UniRule"/>
</dbReference>
<dbReference type="CDD" id="cd04738">
    <property type="entry name" value="DHOD_2_like"/>
    <property type="match status" value="1"/>
</dbReference>
<dbReference type="FunFam" id="3.20.20.70:FF:000028">
    <property type="entry name" value="Dihydroorotate dehydrogenase (quinone)"/>
    <property type="match status" value="1"/>
</dbReference>
<dbReference type="Gene3D" id="3.20.20.70">
    <property type="entry name" value="Aldolase class I"/>
    <property type="match status" value="1"/>
</dbReference>
<dbReference type="HAMAP" id="MF_00225">
    <property type="entry name" value="DHO_dh_type2"/>
    <property type="match status" value="1"/>
</dbReference>
<dbReference type="InterPro" id="IPR013785">
    <property type="entry name" value="Aldolase_TIM"/>
</dbReference>
<dbReference type="InterPro" id="IPR050074">
    <property type="entry name" value="DHO_dehydrogenase"/>
</dbReference>
<dbReference type="InterPro" id="IPR012135">
    <property type="entry name" value="Dihydroorotate_DH_1_2"/>
</dbReference>
<dbReference type="InterPro" id="IPR005719">
    <property type="entry name" value="Dihydroorotate_DH_2"/>
</dbReference>
<dbReference type="InterPro" id="IPR005720">
    <property type="entry name" value="Dihydroorotate_DH_cat"/>
</dbReference>
<dbReference type="InterPro" id="IPR001295">
    <property type="entry name" value="Dihydroorotate_DH_CS"/>
</dbReference>
<dbReference type="NCBIfam" id="NF003644">
    <property type="entry name" value="PRK05286.1-1"/>
    <property type="match status" value="1"/>
</dbReference>
<dbReference type="NCBIfam" id="NF003645">
    <property type="entry name" value="PRK05286.1-2"/>
    <property type="match status" value="1"/>
</dbReference>
<dbReference type="NCBIfam" id="NF003646">
    <property type="entry name" value="PRK05286.1-4"/>
    <property type="match status" value="1"/>
</dbReference>
<dbReference type="NCBIfam" id="NF003652">
    <property type="entry name" value="PRK05286.2-5"/>
    <property type="match status" value="1"/>
</dbReference>
<dbReference type="NCBIfam" id="TIGR01036">
    <property type="entry name" value="pyrD_sub2"/>
    <property type="match status" value="1"/>
</dbReference>
<dbReference type="PANTHER" id="PTHR48109:SF4">
    <property type="entry name" value="DIHYDROOROTATE DEHYDROGENASE (QUINONE), MITOCHONDRIAL"/>
    <property type="match status" value="1"/>
</dbReference>
<dbReference type="PANTHER" id="PTHR48109">
    <property type="entry name" value="DIHYDROOROTATE DEHYDROGENASE (QUINONE), MITOCHONDRIAL-RELATED"/>
    <property type="match status" value="1"/>
</dbReference>
<dbReference type="Pfam" id="PF01180">
    <property type="entry name" value="DHO_dh"/>
    <property type="match status" value="1"/>
</dbReference>
<dbReference type="PIRSF" id="PIRSF000164">
    <property type="entry name" value="DHO_oxidase"/>
    <property type="match status" value="1"/>
</dbReference>
<dbReference type="SUPFAM" id="SSF51395">
    <property type="entry name" value="FMN-linked oxidoreductases"/>
    <property type="match status" value="1"/>
</dbReference>
<dbReference type="PROSITE" id="PS00911">
    <property type="entry name" value="DHODEHASE_1"/>
    <property type="match status" value="1"/>
</dbReference>
<dbReference type="PROSITE" id="PS00912">
    <property type="entry name" value="DHODEHASE_2"/>
    <property type="match status" value="1"/>
</dbReference>
<evidence type="ECO:0000255" key="1">
    <source>
        <dbReference type="HAMAP-Rule" id="MF_00225"/>
    </source>
</evidence>
<sequence length="339" mass="36443">MLYSLAQKFMFQMDAEQAHDLAIKSLKFTANSPLACGYSQALQSSPVNCMGITFPNPVGLAAGLDKDGEAIDAFHAMGFGFVEVGTVTPKPQAGNDKPRLFRLTKAKAIINRMGFNNKGVDNLVRNLQAKKTDILVGVNIGKNKDTPVEQGKDDYLICMDKVYPYAAYITVNISSPNTPGLRTMQYGALLDELLASIKAKQAELAEKYHRYVPVALKIAPDLTADEIESIAMSLISNQFDAVIATNTTLSRDGVEGMTHGTEMGGLSGAPLTAASTMVIKQLASFLNKKIPIIGVGGINSAQDALDKFDAGANLVQIYSGFIYQGPKIIKEIVNAVKMK</sequence>
<organism>
    <name type="scientific">Shewanella denitrificans (strain OS217 / ATCC BAA-1090 / DSM 15013)</name>
    <dbReference type="NCBI Taxonomy" id="318161"/>
    <lineage>
        <taxon>Bacteria</taxon>
        <taxon>Pseudomonadati</taxon>
        <taxon>Pseudomonadota</taxon>
        <taxon>Gammaproteobacteria</taxon>
        <taxon>Alteromonadales</taxon>
        <taxon>Shewanellaceae</taxon>
        <taxon>Shewanella</taxon>
    </lineage>
</organism>
<proteinExistence type="inferred from homology"/>
<comment type="function">
    <text evidence="1">Catalyzes the conversion of dihydroorotate to orotate with quinone as electron acceptor.</text>
</comment>
<comment type="catalytic activity">
    <reaction evidence="1">
        <text>(S)-dihydroorotate + a quinone = orotate + a quinol</text>
        <dbReference type="Rhea" id="RHEA:30187"/>
        <dbReference type="ChEBI" id="CHEBI:24646"/>
        <dbReference type="ChEBI" id="CHEBI:30839"/>
        <dbReference type="ChEBI" id="CHEBI:30864"/>
        <dbReference type="ChEBI" id="CHEBI:132124"/>
        <dbReference type="EC" id="1.3.5.2"/>
    </reaction>
</comment>
<comment type="cofactor">
    <cofactor evidence="1">
        <name>FMN</name>
        <dbReference type="ChEBI" id="CHEBI:58210"/>
    </cofactor>
    <text evidence="1">Binds 1 FMN per subunit.</text>
</comment>
<comment type="pathway">
    <text evidence="1">Pyrimidine metabolism; UMP biosynthesis via de novo pathway; orotate from (S)-dihydroorotate (quinone route): step 1/1.</text>
</comment>
<comment type="subunit">
    <text evidence="1">Monomer.</text>
</comment>
<comment type="subcellular location">
    <subcellularLocation>
        <location evidence="1">Cell membrane</location>
        <topology evidence="1">Peripheral membrane protein</topology>
    </subcellularLocation>
</comment>
<comment type="similarity">
    <text evidence="1">Belongs to the dihydroorotate dehydrogenase family. Type 2 subfamily.</text>
</comment>
<feature type="chain" id="PRO_1000024222" description="Dihydroorotate dehydrogenase (quinone)">
    <location>
        <begin position="1"/>
        <end position="339"/>
    </location>
</feature>
<feature type="active site" description="Nucleophile" evidence="1">
    <location>
        <position position="175"/>
    </location>
</feature>
<feature type="binding site" evidence="1">
    <location>
        <begin position="62"/>
        <end position="66"/>
    </location>
    <ligand>
        <name>FMN</name>
        <dbReference type="ChEBI" id="CHEBI:58210"/>
    </ligand>
</feature>
<feature type="binding site" evidence="1">
    <location>
        <position position="66"/>
    </location>
    <ligand>
        <name>substrate</name>
    </ligand>
</feature>
<feature type="binding site" evidence="1">
    <location>
        <position position="86"/>
    </location>
    <ligand>
        <name>FMN</name>
        <dbReference type="ChEBI" id="CHEBI:58210"/>
    </ligand>
</feature>
<feature type="binding site" evidence="1">
    <location>
        <begin position="111"/>
        <end position="115"/>
    </location>
    <ligand>
        <name>substrate</name>
    </ligand>
</feature>
<feature type="binding site" evidence="1">
    <location>
        <position position="139"/>
    </location>
    <ligand>
        <name>FMN</name>
        <dbReference type="ChEBI" id="CHEBI:58210"/>
    </ligand>
</feature>
<feature type="binding site" evidence="1">
    <location>
        <position position="172"/>
    </location>
    <ligand>
        <name>FMN</name>
        <dbReference type="ChEBI" id="CHEBI:58210"/>
    </ligand>
</feature>
<feature type="binding site" evidence="1">
    <location>
        <position position="172"/>
    </location>
    <ligand>
        <name>substrate</name>
    </ligand>
</feature>
<feature type="binding site" evidence="1">
    <location>
        <position position="177"/>
    </location>
    <ligand>
        <name>substrate</name>
    </ligand>
</feature>
<feature type="binding site" evidence="1">
    <location>
        <position position="217"/>
    </location>
    <ligand>
        <name>FMN</name>
        <dbReference type="ChEBI" id="CHEBI:58210"/>
    </ligand>
</feature>
<feature type="binding site" evidence="1">
    <location>
        <position position="245"/>
    </location>
    <ligand>
        <name>FMN</name>
        <dbReference type="ChEBI" id="CHEBI:58210"/>
    </ligand>
</feature>
<feature type="binding site" evidence="1">
    <location>
        <begin position="246"/>
        <end position="247"/>
    </location>
    <ligand>
        <name>substrate</name>
    </ligand>
</feature>
<feature type="binding site" evidence="1">
    <location>
        <position position="268"/>
    </location>
    <ligand>
        <name>FMN</name>
        <dbReference type="ChEBI" id="CHEBI:58210"/>
    </ligand>
</feature>
<feature type="binding site" evidence="1">
    <location>
        <position position="297"/>
    </location>
    <ligand>
        <name>FMN</name>
        <dbReference type="ChEBI" id="CHEBI:58210"/>
    </ligand>
</feature>
<feature type="binding site" evidence="1">
    <location>
        <begin position="318"/>
        <end position="319"/>
    </location>
    <ligand>
        <name>FMN</name>
        <dbReference type="ChEBI" id="CHEBI:58210"/>
    </ligand>
</feature>
<gene>
    <name evidence="1" type="primary">pyrD</name>
    <name type="ordered locus">Sden_1730</name>
</gene>
<protein>
    <recommendedName>
        <fullName evidence="1">Dihydroorotate dehydrogenase (quinone)</fullName>
        <ecNumber evidence="1">1.3.5.2</ecNumber>
    </recommendedName>
    <alternativeName>
        <fullName evidence="1">DHOdehase</fullName>
        <shortName evidence="1">DHOD</shortName>
        <shortName evidence="1">DHODase</shortName>
    </alternativeName>
    <alternativeName>
        <fullName evidence="1">Dihydroorotate oxidase</fullName>
    </alternativeName>
</protein>
<keyword id="KW-1003">Cell membrane</keyword>
<keyword id="KW-0285">Flavoprotein</keyword>
<keyword id="KW-0288">FMN</keyword>
<keyword id="KW-0472">Membrane</keyword>
<keyword id="KW-0560">Oxidoreductase</keyword>
<keyword id="KW-0665">Pyrimidine biosynthesis</keyword>
<keyword id="KW-1185">Reference proteome</keyword>
<reference key="1">
    <citation type="submission" date="2006-03" db="EMBL/GenBank/DDBJ databases">
        <title>Complete sequence of Shewanella denitrificans OS217.</title>
        <authorList>
            <consortium name="US DOE Joint Genome Institute"/>
            <person name="Copeland A."/>
            <person name="Lucas S."/>
            <person name="Lapidus A."/>
            <person name="Barry K."/>
            <person name="Detter J.C."/>
            <person name="Glavina del Rio T."/>
            <person name="Hammon N."/>
            <person name="Israni S."/>
            <person name="Dalin E."/>
            <person name="Tice H."/>
            <person name="Pitluck S."/>
            <person name="Brettin T."/>
            <person name="Bruce D."/>
            <person name="Han C."/>
            <person name="Tapia R."/>
            <person name="Gilna P."/>
            <person name="Kiss H."/>
            <person name="Schmutz J."/>
            <person name="Larimer F."/>
            <person name="Land M."/>
            <person name="Hauser L."/>
            <person name="Kyrpides N."/>
            <person name="Lykidis A."/>
            <person name="Richardson P."/>
        </authorList>
    </citation>
    <scope>NUCLEOTIDE SEQUENCE [LARGE SCALE GENOMIC DNA]</scope>
    <source>
        <strain>OS217 / ATCC BAA-1090 / DSM 15013</strain>
    </source>
</reference>